<gene>
    <name evidence="1" type="primary">rpsT</name>
    <name type="ordered locus">RPR_06100</name>
</gene>
<proteinExistence type="inferred from homology"/>
<feature type="chain" id="PRO_1000206510" description="Small ribosomal subunit protein bS20">
    <location>
        <begin position="1"/>
        <end position="92"/>
    </location>
</feature>
<protein>
    <recommendedName>
        <fullName evidence="1">Small ribosomal subunit protein bS20</fullName>
    </recommendedName>
    <alternativeName>
        <fullName evidence="2">30S ribosomal protein S20</fullName>
    </alternativeName>
</protein>
<dbReference type="EMBL" id="CP001227">
    <property type="protein sequence ID" value="ACR47750.1"/>
    <property type="molecule type" value="Genomic_DNA"/>
</dbReference>
<dbReference type="RefSeq" id="WP_004997845.1">
    <property type="nucleotide sequence ID" value="NC_012730.1"/>
</dbReference>
<dbReference type="SMR" id="C4K2F3"/>
<dbReference type="GeneID" id="95361460"/>
<dbReference type="KEGG" id="rpk:RPR_06100"/>
<dbReference type="HOGENOM" id="CLU_160655_3_0_5"/>
<dbReference type="Proteomes" id="UP000005015">
    <property type="component" value="Chromosome"/>
</dbReference>
<dbReference type="GO" id="GO:0015935">
    <property type="term" value="C:small ribosomal subunit"/>
    <property type="evidence" value="ECO:0007669"/>
    <property type="project" value="TreeGrafter"/>
</dbReference>
<dbReference type="GO" id="GO:0070181">
    <property type="term" value="F:small ribosomal subunit rRNA binding"/>
    <property type="evidence" value="ECO:0007669"/>
    <property type="project" value="TreeGrafter"/>
</dbReference>
<dbReference type="GO" id="GO:0003735">
    <property type="term" value="F:structural constituent of ribosome"/>
    <property type="evidence" value="ECO:0007669"/>
    <property type="project" value="InterPro"/>
</dbReference>
<dbReference type="GO" id="GO:0006412">
    <property type="term" value="P:translation"/>
    <property type="evidence" value="ECO:0007669"/>
    <property type="project" value="UniProtKB-UniRule"/>
</dbReference>
<dbReference type="Gene3D" id="1.20.58.110">
    <property type="entry name" value="Ribosomal protein S20"/>
    <property type="match status" value="1"/>
</dbReference>
<dbReference type="HAMAP" id="MF_00500">
    <property type="entry name" value="Ribosomal_bS20"/>
    <property type="match status" value="1"/>
</dbReference>
<dbReference type="InterPro" id="IPR002583">
    <property type="entry name" value="Ribosomal_bS20"/>
</dbReference>
<dbReference type="InterPro" id="IPR036510">
    <property type="entry name" value="Ribosomal_bS20_sf"/>
</dbReference>
<dbReference type="NCBIfam" id="TIGR00029">
    <property type="entry name" value="S20"/>
    <property type="match status" value="1"/>
</dbReference>
<dbReference type="PANTHER" id="PTHR33398">
    <property type="entry name" value="30S RIBOSOMAL PROTEIN S20"/>
    <property type="match status" value="1"/>
</dbReference>
<dbReference type="PANTHER" id="PTHR33398:SF1">
    <property type="entry name" value="SMALL RIBOSOMAL SUBUNIT PROTEIN BS20C"/>
    <property type="match status" value="1"/>
</dbReference>
<dbReference type="Pfam" id="PF01649">
    <property type="entry name" value="Ribosomal_S20p"/>
    <property type="match status" value="1"/>
</dbReference>
<dbReference type="SUPFAM" id="SSF46992">
    <property type="entry name" value="Ribosomal protein S20"/>
    <property type="match status" value="1"/>
</dbReference>
<comment type="function">
    <text evidence="1">Binds directly to 16S ribosomal RNA.</text>
</comment>
<comment type="similarity">
    <text evidence="1">Belongs to the bacterial ribosomal protein bS20 family.</text>
</comment>
<reference key="1">
    <citation type="journal article" date="2009" name="PLoS ONE">
        <title>Genome sequence of the endosymbiont Rickettsia peacockii and comparison with virulent Rickettsia rickettsii: identification of virulence factors.</title>
        <authorList>
            <person name="Felsheim R.F."/>
            <person name="Kurtti T.J."/>
            <person name="Munderloh U.G."/>
        </authorList>
    </citation>
    <scope>NUCLEOTIDE SEQUENCE [LARGE SCALE GENOMIC DNA]</scope>
    <source>
        <strain>Rustic</strain>
    </source>
</reference>
<name>RS20_RICPU</name>
<evidence type="ECO:0000255" key="1">
    <source>
        <dbReference type="HAMAP-Rule" id="MF_00500"/>
    </source>
</evidence>
<evidence type="ECO:0000305" key="2"/>
<organism>
    <name type="scientific">Rickettsia peacockii (strain Rustic)</name>
    <dbReference type="NCBI Taxonomy" id="562019"/>
    <lineage>
        <taxon>Bacteria</taxon>
        <taxon>Pseudomonadati</taxon>
        <taxon>Pseudomonadota</taxon>
        <taxon>Alphaproteobacteria</taxon>
        <taxon>Rickettsiales</taxon>
        <taxon>Rickettsiaceae</taxon>
        <taxon>Rickettsieae</taxon>
        <taxon>Rickettsia</taxon>
        <taxon>spotted fever group</taxon>
    </lineage>
</organism>
<keyword id="KW-0687">Ribonucleoprotein</keyword>
<keyword id="KW-0689">Ribosomal protein</keyword>
<keyword id="KW-0694">RNA-binding</keyword>
<keyword id="KW-0699">rRNA-binding</keyword>
<sequence length="92" mass="10223">MANHSSAKKAARQTVKRTLINKKRSSAIKTFIKKVVHEISLGNKENANIALSVAQSKIMQGVKKNIIKLNTASRKISRLSRQIKSLKVNNTL</sequence>
<accession>C4K2F3</accession>